<gene>
    <name type="primary">hisZ</name>
    <name type="synonym">hisS2</name>
    <name type="ordered locus">LA_1111</name>
</gene>
<protein>
    <recommendedName>
        <fullName>ATP phosphoribosyltransferase regulatory subunit</fullName>
    </recommendedName>
</protein>
<organism>
    <name type="scientific">Leptospira interrogans serogroup Icterohaemorrhagiae serovar Lai (strain 56601)</name>
    <dbReference type="NCBI Taxonomy" id="189518"/>
    <lineage>
        <taxon>Bacteria</taxon>
        <taxon>Pseudomonadati</taxon>
        <taxon>Spirochaetota</taxon>
        <taxon>Spirochaetia</taxon>
        <taxon>Leptospirales</taxon>
        <taxon>Leptospiraceae</taxon>
        <taxon>Leptospira</taxon>
    </lineage>
</organism>
<name>HISZ_LEPIN</name>
<dbReference type="EMBL" id="AE010300">
    <property type="protein sequence ID" value="AAN48310.1"/>
    <property type="molecule type" value="Genomic_DNA"/>
</dbReference>
<dbReference type="RefSeq" id="NP_711292.1">
    <property type="nucleotide sequence ID" value="NC_004342.2"/>
</dbReference>
<dbReference type="RefSeq" id="WP_001075198.1">
    <property type="nucleotide sequence ID" value="NC_004342.2"/>
</dbReference>
<dbReference type="SMR" id="Q8F737"/>
<dbReference type="STRING" id="189518.LA_1111"/>
<dbReference type="PaxDb" id="189518-LA_1111"/>
<dbReference type="EnsemblBacteria" id="AAN48310">
    <property type="protein sequence ID" value="AAN48310"/>
    <property type="gene ID" value="LA_1111"/>
</dbReference>
<dbReference type="KEGG" id="lil:LA_1111"/>
<dbReference type="PATRIC" id="fig|189518.3.peg.1102"/>
<dbReference type="HOGENOM" id="CLU_025113_0_2_12"/>
<dbReference type="InParanoid" id="Q8F737"/>
<dbReference type="OrthoDB" id="9800814at2"/>
<dbReference type="UniPathway" id="UPA00031">
    <property type="reaction ID" value="UER00006"/>
</dbReference>
<dbReference type="Proteomes" id="UP000001408">
    <property type="component" value="Chromosome I"/>
</dbReference>
<dbReference type="GO" id="GO:0005737">
    <property type="term" value="C:cytoplasm"/>
    <property type="evidence" value="ECO:0007669"/>
    <property type="project" value="UniProtKB-SubCell"/>
</dbReference>
<dbReference type="GO" id="GO:0000105">
    <property type="term" value="P:L-histidine biosynthetic process"/>
    <property type="evidence" value="ECO:0007669"/>
    <property type="project" value="UniProtKB-UniPathway"/>
</dbReference>
<dbReference type="Gene3D" id="3.30.930.10">
    <property type="entry name" value="Bira Bifunctional Protein, Domain 2"/>
    <property type="match status" value="1"/>
</dbReference>
<dbReference type="InterPro" id="IPR045864">
    <property type="entry name" value="aa-tRNA-synth_II/BPL/LPL"/>
</dbReference>
<dbReference type="InterPro" id="IPR041715">
    <property type="entry name" value="HisRS-like_core"/>
</dbReference>
<dbReference type="InterPro" id="IPR004516">
    <property type="entry name" value="HisRS/HisZ"/>
</dbReference>
<dbReference type="NCBIfam" id="NF008944">
    <property type="entry name" value="PRK12292.3-2"/>
    <property type="match status" value="1"/>
</dbReference>
<dbReference type="PANTHER" id="PTHR11476:SF7">
    <property type="entry name" value="HISTIDINE--TRNA LIGASE"/>
    <property type="match status" value="1"/>
</dbReference>
<dbReference type="PANTHER" id="PTHR11476">
    <property type="entry name" value="HISTIDYL-TRNA SYNTHETASE"/>
    <property type="match status" value="1"/>
</dbReference>
<dbReference type="Pfam" id="PF13393">
    <property type="entry name" value="tRNA-synt_His"/>
    <property type="match status" value="1"/>
</dbReference>
<dbReference type="PIRSF" id="PIRSF001549">
    <property type="entry name" value="His-tRNA_synth"/>
    <property type="match status" value="1"/>
</dbReference>
<dbReference type="SUPFAM" id="SSF55681">
    <property type="entry name" value="Class II aaRS and biotin synthetases"/>
    <property type="match status" value="1"/>
</dbReference>
<reference key="1">
    <citation type="journal article" date="2003" name="Nature">
        <title>Unique physiological and pathogenic features of Leptospira interrogans revealed by whole-genome sequencing.</title>
        <authorList>
            <person name="Ren S.-X."/>
            <person name="Fu G."/>
            <person name="Jiang X.-G."/>
            <person name="Zeng R."/>
            <person name="Miao Y.-G."/>
            <person name="Xu H."/>
            <person name="Zhang Y.-X."/>
            <person name="Xiong H."/>
            <person name="Lu G."/>
            <person name="Lu L.-F."/>
            <person name="Jiang H.-Q."/>
            <person name="Jia J."/>
            <person name="Tu Y.-F."/>
            <person name="Jiang J.-X."/>
            <person name="Gu W.-Y."/>
            <person name="Zhang Y.-Q."/>
            <person name="Cai Z."/>
            <person name="Sheng H.-H."/>
            <person name="Yin H.-F."/>
            <person name="Zhang Y."/>
            <person name="Zhu G.-F."/>
            <person name="Wan M."/>
            <person name="Huang H.-L."/>
            <person name="Qian Z."/>
            <person name="Wang S.-Y."/>
            <person name="Ma W."/>
            <person name="Yao Z.-J."/>
            <person name="Shen Y."/>
            <person name="Qiang B.-Q."/>
            <person name="Xia Q.-C."/>
            <person name="Guo X.-K."/>
            <person name="Danchin A."/>
            <person name="Saint Girons I."/>
            <person name="Somerville R.L."/>
            <person name="Wen Y.-M."/>
            <person name="Shi M.-H."/>
            <person name="Chen Z."/>
            <person name="Xu J.-G."/>
            <person name="Zhao G.-P."/>
        </authorList>
    </citation>
    <scope>NUCLEOTIDE SEQUENCE [LARGE SCALE GENOMIC DNA]</scope>
    <source>
        <strain>56601</strain>
    </source>
</reference>
<comment type="function">
    <text evidence="1">Required for the first step of histidine biosynthesis. May allow the feedback regulation of ATP phosphoribosyltransferase activity by histidine (By similarity).</text>
</comment>
<comment type="pathway">
    <text>Amino-acid biosynthesis; L-histidine biosynthesis; L-histidine from 5-phospho-alpha-D-ribose 1-diphosphate: step 1/9.</text>
</comment>
<comment type="subunit">
    <text evidence="1">Heteromultimer composed of HisG and HisZ subunits.</text>
</comment>
<comment type="subcellular location">
    <subcellularLocation>
        <location evidence="1">Cytoplasm</location>
    </subcellularLocation>
</comment>
<comment type="miscellaneous">
    <text>This function is generally fulfilled by the C-terminal part of HisG, which is missing in some bacteria such as this one.</text>
</comment>
<comment type="similarity">
    <text evidence="2">Belongs to the class-II aminoacyl-tRNA synthetase family. HisZ subfamily.</text>
</comment>
<accession>Q8F737</accession>
<keyword id="KW-0028">Amino-acid biosynthesis</keyword>
<keyword id="KW-0963">Cytoplasm</keyword>
<keyword id="KW-0368">Histidine biosynthesis</keyword>
<keyword id="KW-1185">Reference proteome</keyword>
<proteinExistence type="inferred from homology"/>
<evidence type="ECO:0000250" key="1"/>
<evidence type="ECO:0000305" key="2"/>
<sequence length="344" mass="39114">MNQNLPEPNQKKWIPDGFHFLGPEDSKYRRTLLETISGVLKKKGYSEVFLPAFDYSSTFIQTVSAPDSSSLFRIRDLSGNEISPSIDLTVQAVKGMAGFSHQRENQNIFYIGRVFRESTKGSVARKEILQIGAESIGVSGKENTFKILEELDEIISLLPLENKLTLVLGNVNLFQSIVQEFELKQNEIEILSKLLYQKNVNEIQKIFGEKKNHTDLIRLLSSLVLNFDLNSLKNSLNINSLSKNLQKSLSSILEETYWIFNSWESKKRRIDLCIDFSLLRDLNYYTGFVFQGYLQDSPDPVLTGGTYDHLYEMFSGVQKNASGYALMVNTLESSLKTPLFNLSS</sequence>
<feature type="chain" id="PRO_0000171041" description="ATP phosphoribosyltransferase regulatory subunit">
    <location>
        <begin position="1"/>
        <end position="344"/>
    </location>
</feature>